<feature type="chain" id="PRO_0000300922" description="Glutamate-1-semialdehyde 2,1-aminomutase">
    <location>
        <begin position="1"/>
        <end position="426"/>
    </location>
</feature>
<feature type="modified residue" description="N6-(pyridoxal phosphate)lysine" evidence="1">
    <location>
        <position position="265"/>
    </location>
</feature>
<proteinExistence type="inferred from homology"/>
<organism>
    <name type="scientific">Marinobacter nauticus (strain ATCC 700491 / DSM 11845 / VT8)</name>
    <name type="common">Marinobacter aquaeolei</name>
    <dbReference type="NCBI Taxonomy" id="351348"/>
    <lineage>
        <taxon>Bacteria</taxon>
        <taxon>Pseudomonadati</taxon>
        <taxon>Pseudomonadota</taxon>
        <taxon>Gammaproteobacteria</taxon>
        <taxon>Pseudomonadales</taxon>
        <taxon>Marinobacteraceae</taxon>
        <taxon>Marinobacter</taxon>
    </lineage>
</organism>
<dbReference type="EC" id="5.4.3.8" evidence="1"/>
<dbReference type="EMBL" id="CP000514">
    <property type="protein sequence ID" value="ABM17784.1"/>
    <property type="molecule type" value="Genomic_DNA"/>
</dbReference>
<dbReference type="RefSeq" id="WP_011784216.1">
    <property type="nucleotide sequence ID" value="NC_008740.1"/>
</dbReference>
<dbReference type="SMR" id="A1TYG5"/>
<dbReference type="STRING" id="351348.Maqu_0686"/>
<dbReference type="KEGG" id="maq:Maqu_0686"/>
<dbReference type="eggNOG" id="COG0001">
    <property type="taxonomic scope" value="Bacteria"/>
</dbReference>
<dbReference type="HOGENOM" id="CLU_016922_1_5_6"/>
<dbReference type="OrthoDB" id="9801052at2"/>
<dbReference type="UniPathway" id="UPA00251">
    <property type="reaction ID" value="UER00317"/>
</dbReference>
<dbReference type="Proteomes" id="UP000000998">
    <property type="component" value="Chromosome"/>
</dbReference>
<dbReference type="GO" id="GO:0005737">
    <property type="term" value="C:cytoplasm"/>
    <property type="evidence" value="ECO:0007669"/>
    <property type="project" value="UniProtKB-SubCell"/>
</dbReference>
<dbReference type="GO" id="GO:0042286">
    <property type="term" value="F:glutamate-1-semialdehyde 2,1-aminomutase activity"/>
    <property type="evidence" value="ECO:0007669"/>
    <property type="project" value="UniProtKB-UniRule"/>
</dbReference>
<dbReference type="GO" id="GO:0030170">
    <property type="term" value="F:pyridoxal phosphate binding"/>
    <property type="evidence" value="ECO:0007669"/>
    <property type="project" value="InterPro"/>
</dbReference>
<dbReference type="GO" id="GO:0008483">
    <property type="term" value="F:transaminase activity"/>
    <property type="evidence" value="ECO:0007669"/>
    <property type="project" value="InterPro"/>
</dbReference>
<dbReference type="GO" id="GO:0006782">
    <property type="term" value="P:protoporphyrinogen IX biosynthetic process"/>
    <property type="evidence" value="ECO:0007669"/>
    <property type="project" value="UniProtKB-UniRule"/>
</dbReference>
<dbReference type="CDD" id="cd00610">
    <property type="entry name" value="OAT_like"/>
    <property type="match status" value="1"/>
</dbReference>
<dbReference type="FunFam" id="3.40.640.10:FF:000021">
    <property type="entry name" value="Glutamate-1-semialdehyde 2,1-aminomutase"/>
    <property type="match status" value="1"/>
</dbReference>
<dbReference type="Gene3D" id="3.90.1150.10">
    <property type="entry name" value="Aspartate Aminotransferase, domain 1"/>
    <property type="match status" value="1"/>
</dbReference>
<dbReference type="Gene3D" id="3.40.640.10">
    <property type="entry name" value="Type I PLP-dependent aspartate aminotransferase-like (Major domain)"/>
    <property type="match status" value="1"/>
</dbReference>
<dbReference type="HAMAP" id="MF_00375">
    <property type="entry name" value="HemL_aminotrans_3"/>
    <property type="match status" value="1"/>
</dbReference>
<dbReference type="InterPro" id="IPR004639">
    <property type="entry name" value="4pyrrol_synth_GluAld_NH2Trfase"/>
</dbReference>
<dbReference type="InterPro" id="IPR005814">
    <property type="entry name" value="Aminotrans_3"/>
</dbReference>
<dbReference type="InterPro" id="IPR049704">
    <property type="entry name" value="Aminotrans_3_PPA_site"/>
</dbReference>
<dbReference type="InterPro" id="IPR015424">
    <property type="entry name" value="PyrdxlP-dep_Trfase"/>
</dbReference>
<dbReference type="InterPro" id="IPR015421">
    <property type="entry name" value="PyrdxlP-dep_Trfase_major"/>
</dbReference>
<dbReference type="InterPro" id="IPR015422">
    <property type="entry name" value="PyrdxlP-dep_Trfase_small"/>
</dbReference>
<dbReference type="NCBIfam" id="TIGR00713">
    <property type="entry name" value="hemL"/>
    <property type="match status" value="1"/>
</dbReference>
<dbReference type="NCBIfam" id="NF000818">
    <property type="entry name" value="PRK00062.1"/>
    <property type="match status" value="1"/>
</dbReference>
<dbReference type="PANTHER" id="PTHR43713">
    <property type="entry name" value="GLUTAMATE-1-SEMIALDEHYDE 2,1-AMINOMUTASE"/>
    <property type="match status" value="1"/>
</dbReference>
<dbReference type="PANTHER" id="PTHR43713:SF3">
    <property type="entry name" value="GLUTAMATE-1-SEMIALDEHYDE 2,1-AMINOMUTASE 1, CHLOROPLASTIC-RELATED"/>
    <property type="match status" value="1"/>
</dbReference>
<dbReference type="Pfam" id="PF00202">
    <property type="entry name" value="Aminotran_3"/>
    <property type="match status" value="1"/>
</dbReference>
<dbReference type="SUPFAM" id="SSF53383">
    <property type="entry name" value="PLP-dependent transferases"/>
    <property type="match status" value="1"/>
</dbReference>
<dbReference type="PROSITE" id="PS00600">
    <property type="entry name" value="AA_TRANSFER_CLASS_3"/>
    <property type="match status" value="1"/>
</dbReference>
<gene>
    <name evidence="1" type="primary">hemL</name>
    <name type="ordered locus">Maqu_0686</name>
</gene>
<sequence>MNHSETLFEQAQKYIPGGVNSPVRAFRGVGGTPVFFKHAEGAYLYDEDDRRYIDFIGSWGPMILGHSDPRIKAALHAQVDLGVGYGAPTAIETEMAKKVCELVPSIELVRMVNSGTEATMSAIRLARGYTGRDKIVKFEGCYHGHVDSLLVKAGSGALTLGVPNSPGIPASLAEHTLTLTYNDIDEVRETFRQMGDQIAAIIVEPVAGNMNCIPPVPGFLEALREVCDEHGTVLIFDEVMTGFRVSLGGAQGFYGVKPDLTALGKVIGGGLPVGAFGGKREIMEHISPLGPVYQAGTLSGNPLAMTAGLTTLNAISEPGFHDRLTEKTNRVKDGFKAAADEAGIPLAVQSAGAMFGFFFTAEPSITRFDQVMACDVERFKAFFQGMLKEGVYLAPSAFEAGFTTAALSDEDIEFTLAAARKVMKTL</sequence>
<protein>
    <recommendedName>
        <fullName evidence="1">Glutamate-1-semialdehyde 2,1-aminomutase</fullName>
        <shortName evidence="1">GSA</shortName>
        <ecNumber evidence="1">5.4.3.8</ecNumber>
    </recommendedName>
    <alternativeName>
        <fullName evidence="1">Glutamate-1-semialdehyde aminotransferase</fullName>
        <shortName evidence="1">GSA-AT</shortName>
    </alternativeName>
</protein>
<reference key="1">
    <citation type="journal article" date="2011" name="Appl. Environ. Microbiol.">
        <title>Genomic potential of Marinobacter aquaeolei, a biogeochemical 'opportunitroph'.</title>
        <authorList>
            <person name="Singer E."/>
            <person name="Webb E.A."/>
            <person name="Nelson W.C."/>
            <person name="Heidelberg J.F."/>
            <person name="Ivanova N."/>
            <person name="Pati A."/>
            <person name="Edwards K.J."/>
        </authorList>
    </citation>
    <scope>NUCLEOTIDE SEQUENCE [LARGE SCALE GENOMIC DNA]</scope>
    <source>
        <strain>ATCC 700491 / DSM 11845 / VT8</strain>
    </source>
</reference>
<accession>A1TYG5</accession>
<keyword id="KW-0963">Cytoplasm</keyword>
<keyword id="KW-0413">Isomerase</keyword>
<keyword id="KW-0627">Porphyrin biosynthesis</keyword>
<keyword id="KW-0663">Pyridoxal phosphate</keyword>
<name>GSA_MARN8</name>
<evidence type="ECO:0000255" key="1">
    <source>
        <dbReference type="HAMAP-Rule" id="MF_00375"/>
    </source>
</evidence>
<comment type="catalytic activity">
    <reaction evidence="1">
        <text>(S)-4-amino-5-oxopentanoate = 5-aminolevulinate</text>
        <dbReference type="Rhea" id="RHEA:14265"/>
        <dbReference type="ChEBI" id="CHEBI:57501"/>
        <dbReference type="ChEBI" id="CHEBI:356416"/>
        <dbReference type="EC" id="5.4.3.8"/>
    </reaction>
</comment>
<comment type="cofactor">
    <cofactor evidence="1">
        <name>pyridoxal 5'-phosphate</name>
        <dbReference type="ChEBI" id="CHEBI:597326"/>
    </cofactor>
</comment>
<comment type="pathway">
    <text evidence="1">Porphyrin-containing compound metabolism; protoporphyrin-IX biosynthesis; 5-aminolevulinate from L-glutamyl-tRNA(Glu): step 2/2.</text>
</comment>
<comment type="subunit">
    <text evidence="1">Homodimer.</text>
</comment>
<comment type="subcellular location">
    <subcellularLocation>
        <location evidence="1">Cytoplasm</location>
    </subcellularLocation>
</comment>
<comment type="similarity">
    <text evidence="1">Belongs to the class-III pyridoxal-phosphate-dependent aminotransferase family. HemL subfamily.</text>
</comment>